<accession>B1XJH9</accession>
<sequence length="76" mass="8684">MPKADIHPEWYPDAKVICNGEVVMTIGSTQPEINVEIWSGNHPFYTGTQKIIDTEGRVDRFLRKYGMLSNNSDDQK</sequence>
<gene>
    <name evidence="1" type="primary">rpmE</name>
    <name evidence="1" type="synonym">rpl31</name>
    <name type="ordered locus">SYNPCC7002_A1037</name>
</gene>
<feature type="chain" id="PRO_1000126748" description="Large ribosomal subunit protein bL31">
    <location>
        <begin position="1"/>
        <end position="76"/>
    </location>
</feature>
<protein>
    <recommendedName>
        <fullName evidence="1">Large ribosomal subunit protein bL31</fullName>
    </recommendedName>
    <alternativeName>
        <fullName evidence="2">50S ribosomal protein L31</fullName>
    </alternativeName>
</protein>
<reference key="1">
    <citation type="submission" date="2008-02" db="EMBL/GenBank/DDBJ databases">
        <title>Complete sequence of Synechococcus sp. PCC 7002.</title>
        <authorList>
            <person name="Li T."/>
            <person name="Zhao J."/>
            <person name="Zhao C."/>
            <person name="Liu Z."/>
            <person name="Zhao F."/>
            <person name="Marquardt J."/>
            <person name="Nomura C.T."/>
            <person name="Persson S."/>
            <person name="Detter J.C."/>
            <person name="Richardson P.M."/>
            <person name="Lanz C."/>
            <person name="Schuster S.C."/>
            <person name="Wang J."/>
            <person name="Li S."/>
            <person name="Huang X."/>
            <person name="Cai T."/>
            <person name="Yu Z."/>
            <person name="Luo J."/>
            <person name="Zhao J."/>
            <person name="Bryant D.A."/>
        </authorList>
    </citation>
    <scope>NUCLEOTIDE SEQUENCE [LARGE SCALE GENOMIC DNA]</scope>
    <source>
        <strain>ATCC 27264 / PCC 7002 / PR-6</strain>
    </source>
</reference>
<keyword id="KW-1185">Reference proteome</keyword>
<keyword id="KW-0687">Ribonucleoprotein</keyword>
<keyword id="KW-0689">Ribosomal protein</keyword>
<keyword id="KW-0694">RNA-binding</keyword>
<keyword id="KW-0699">rRNA-binding</keyword>
<proteinExistence type="inferred from homology"/>
<name>RL31_PICP2</name>
<comment type="function">
    <text evidence="1">Binds the 23S rRNA.</text>
</comment>
<comment type="subunit">
    <text evidence="1">Part of the 50S ribosomal subunit.</text>
</comment>
<comment type="similarity">
    <text evidence="1">Belongs to the bacterial ribosomal protein bL31 family. Type A subfamily.</text>
</comment>
<dbReference type="EMBL" id="CP000951">
    <property type="protein sequence ID" value="ACA99039.1"/>
    <property type="molecule type" value="Genomic_DNA"/>
</dbReference>
<dbReference type="RefSeq" id="WP_012306663.1">
    <property type="nucleotide sequence ID" value="NZ_JAHHPU010000001.1"/>
</dbReference>
<dbReference type="STRING" id="32049.SYNPCC7002_A1037"/>
<dbReference type="KEGG" id="syp:SYNPCC7002_A1037"/>
<dbReference type="eggNOG" id="COG0254">
    <property type="taxonomic scope" value="Bacteria"/>
</dbReference>
<dbReference type="HOGENOM" id="CLU_114306_1_2_3"/>
<dbReference type="Proteomes" id="UP000001688">
    <property type="component" value="Chromosome"/>
</dbReference>
<dbReference type="GO" id="GO:1990904">
    <property type="term" value="C:ribonucleoprotein complex"/>
    <property type="evidence" value="ECO:0007669"/>
    <property type="project" value="UniProtKB-KW"/>
</dbReference>
<dbReference type="GO" id="GO:0005840">
    <property type="term" value="C:ribosome"/>
    <property type="evidence" value="ECO:0007669"/>
    <property type="project" value="UniProtKB-KW"/>
</dbReference>
<dbReference type="GO" id="GO:0019843">
    <property type="term" value="F:rRNA binding"/>
    <property type="evidence" value="ECO:0007669"/>
    <property type="project" value="UniProtKB-KW"/>
</dbReference>
<dbReference type="GO" id="GO:0003735">
    <property type="term" value="F:structural constituent of ribosome"/>
    <property type="evidence" value="ECO:0007669"/>
    <property type="project" value="InterPro"/>
</dbReference>
<dbReference type="GO" id="GO:0006412">
    <property type="term" value="P:translation"/>
    <property type="evidence" value="ECO:0007669"/>
    <property type="project" value="UniProtKB-UniRule"/>
</dbReference>
<dbReference type="Gene3D" id="4.10.830.30">
    <property type="entry name" value="Ribosomal protein L31"/>
    <property type="match status" value="1"/>
</dbReference>
<dbReference type="HAMAP" id="MF_00501">
    <property type="entry name" value="Ribosomal_bL31_1"/>
    <property type="match status" value="1"/>
</dbReference>
<dbReference type="InterPro" id="IPR034704">
    <property type="entry name" value="Ribosomal_bL28/bL31-like_sf"/>
</dbReference>
<dbReference type="InterPro" id="IPR002150">
    <property type="entry name" value="Ribosomal_bL31"/>
</dbReference>
<dbReference type="InterPro" id="IPR027491">
    <property type="entry name" value="Ribosomal_bL31_A"/>
</dbReference>
<dbReference type="InterPro" id="IPR042105">
    <property type="entry name" value="Ribosomal_bL31_sf"/>
</dbReference>
<dbReference type="NCBIfam" id="TIGR00105">
    <property type="entry name" value="L31"/>
    <property type="match status" value="1"/>
</dbReference>
<dbReference type="NCBIfam" id="NF000612">
    <property type="entry name" value="PRK00019.1"/>
    <property type="match status" value="1"/>
</dbReference>
<dbReference type="NCBIfam" id="NF001809">
    <property type="entry name" value="PRK00528.1"/>
    <property type="match status" value="1"/>
</dbReference>
<dbReference type="PANTHER" id="PTHR33280">
    <property type="entry name" value="50S RIBOSOMAL PROTEIN L31, CHLOROPLASTIC"/>
    <property type="match status" value="1"/>
</dbReference>
<dbReference type="PANTHER" id="PTHR33280:SF1">
    <property type="entry name" value="LARGE RIBOSOMAL SUBUNIT PROTEIN BL31C"/>
    <property type="match status" value="1"/>
</dbReference>
<dbReference type="Pfam" id="PF01197">
    <property type="entry name" value="Ribosomal_L31"/>
    <property type="match status" value="1"/>
</dbReference>
<dbReference type="PRINTS" id="PR01249">
    <property type="entry name" value="RIBOSOMALL31"/>
</dbReference>
<dbReference type="SUPFAM" id="SSF143800">
    <property type="entry name" value="L28p-like"/>
    <property type="match status" value="1"/>
</dbReference>
<dbReference type="PROSITE" id="PS01143">
    <property type="entry name" value="RIBOSOMAL_L31"/>
    <property type="match status" value="1"/>
</dbReference>
<evidence type="ECO:0000255" key="1">
    <source>
        <dbReference type="HAMAP-Rule" id="MF_00501"/>
    </source>
</evidence>
<evidence type="ECO:0000305" key="2"/>
<organism>
    <name type="scientific">Picosynechococcus sp. (strain ATCC 27264 / PCC 7002 / PR-6)</name>
    <name type="common">Agmenellum quadruplicatum</name>
    <dbReference type="NCBI Taxonomy" id="32049"/>
    <lineage>
        <taxon>Bacteria</taxon>
        <taxon>Bacillati</taxon>
        <taxon>Cyanobacteriota</taxon>
        <taxon>Cyanophyceae</taxon>
        <taxon>Oscillatoriophycideae</taxon>
        <taxon>Chroococcales</taxon>
        <taxon>Geminocystaceae</taxon>
        <taxon>Picosynechococcus</taxon>
    </lineage>
</organism>